<feature type="chain" id="PRO_0000221901" description="Preterminal protein" evidence="1">
    <location>
        <begin position="1"/>
        <end position="723"/>
    </location>
</feature>
<feature type="chain" id="PRO_0000433946" description="Intermediate terminal protein" evidence="1">
    <location>
        <begin position="291"/>
        <end position="723"/>
    </location>
</feature>
<feature type="chain" id="PRO_0000433947" description="Terminal protein" evidence="1">
    <location>
        <begin position="423"/>
        <end position="723"/>
    </location>
</feature>
<feature type="region of interest" description="Disordered" evidence="2">
    <location>
        <begin position="457"/>
        <end position="492"/>
    </location>
</feature>
<feature type="short sequence motif" description="Nuclear localization signal" evidence="1">
    <location>
        <begin position="453"/>
        <end position="462"/>
    </location>
</feature>
<feature type="site" description="Cleavage; by adenovirus protease" evidence="1">
    <location>
        <begin position="290"/>
        <end position="291"/>
    </location>
</feature>
<feature type="site" description="Cleavage; by adenovirus protease" evidence="1">
    <location>
        <begin position="422"/>
        <end position="423"/>
    </location>
</feature>
<feature type="site" description="Priming of strand displacement replication by covalently linking the first nucleotide of the new DNA chain" evidence="1">
    <location>
        <position position="651"/>
    </location>
</feature>
<feature type="modified residue" description="O-(5'-phospho-DNA)-serine" evidence="1">
    <location>
        <position position="651"/>
    </location>
</feature>
<reference key="1">
    <citation type="journal article" date="1997" name="J. Gen. Virol.">
        <title>Complete DNA sequence of canine adenovirus type 1.</title>
        <authorList>
            <person name="Morrison M.D."/>
            <person name="Onions D.E."/>
            <person name="Nicolson L."/>
        </authorList>
    </citation>
    <scope>NUCLEOTIDE SEQUENCE [LARGE SCALE GENOMIC DNA]</scope>
</reference>
<comment type="function">
    <text evidence="1">Protein covalently bound to the viral DNA that acts as a primer for viral genomic replication by DNA strand displacement. Assembles on the viral origin of replication in an initiation complex with viral polymerase, DBP, host NFIA and host POU2F1/OCT1. During initiation, the polymerase covalently couples the first dCTP with Ser-580 of pTP. The terminal protein stimulates the template activity over 20 fold compared to protein-free templates. Neo-synthesized viral genomes are linked to two preterminal proteins, one for each 5' end. These new genomes are encapsidated in the nucleus, and during capsid maturation by viral protease, preterminal protein is first cleaved into intermediary (iTP), then into mature TP. May play a role in host nuclear matrix localization of genomic DNA.</text>
</comment>
<comment type="subunit">
    <text evidence="1">Heterodimer with the polymerase; this heterodimer binds to bp 9 to 18 of the genome. Interacts with host POU2F1; POU2F1 binds to the auxiliary sequences in the inverted terminal repeats and tethers the pTP-POL heterodimer to the origin DNA thereby participating in the assembly of the pre-initiation complex (POL-TP-DBP-NFIA-POU2F1).</text>
</comment>
<comment type="subcellular location">
    <subcellularLocation>
        <location evidence="1">Host nucleus matrix</location>
    </subcellularLocation>
</comment>
<comment type="PTM">
    <text evidence="1">Preterminal protein is used to replicate viral genome, upon genomic encapsidation it is processed first into iTP and finally into TP by adenovirus protease.</text>
</comment>
<comment type="similarity">
    <text evidence="1">Belongs to the adenoviridae terminal protein family.</text>
</comment>
<organismHost>
    <name type="scientific">Canis lupus familiaris</name>
    <name type="common">Dog</name>
    <name type="synonym">Canis familiaris</name>
    <dbReference type="NCBI Taxonomy" id="9615"/>
</organismHost>
<sequence length="723" mass="82334">MPFSGLFSKSRSSSTRLEGWSLRNILPDSYFKCRNPSASSPSLSLNTLLAGMYASAASCFICTRGCTSGAAPPCNRAKPSLSASSLTTEAGRGFICRKTGCICNGANESAIDSLFVLQNALDCARLTGQTPYTVEVFRPIRNIFNRVREYTRASTTSVGLAWMSKYIYQYHRLMLMNLSPREPATEGWPLFLYPPPHLLVGYQYLVRTCNDYVFDTRSYSRLKYTEIHLPLQQKLNWTVMANCSYTINTGAYHRFIDFENFEETLAQVQQAVLAERVVADLALIRPMRGYGTTNMAGDRQVPVEGLLQDHYKNLSQCQNHAWGLADRMRIQNAGNKDIVILTTIRKLKTAFFNFLVSPRNPHTILSLPCDCLWLDAFMQKFTDPTLSQFQTIQSLPSQSVTKSIISALSLPGPAPCTPLSGGAFELRPRENGRAVTEEMRRRRGEMIERFIDRLPMRRRRRRAPPPPPMSEELSEPEVEAFPPASPPRRSFEEEVRDTIVEAIRLLQEELTVSARNEQFFNFAINFYEVIQRLEMLGNINELTIRRWVMYFFVAEHVATTLNYLHHNLRLYPPCSRWVDLELAQVVMRARDHEGQVVYSRVWNEMGENAFSQLMARVSGDLAATVERAGLGELEEEEMEQFMADIAYHENSGDVSEILRQVAINDTEVDSMELSFRFKVTGPVVFSQNRQIQSINRRVVALASQLRMQHRPLPAQHEQVQLPP</sequence>
<proteinExistence type="inferred from homology"/>
<protein>
    <recommendedName>
        <fullName evidence="1">Preterminal protein</fullName>
        <shortName evidence="1">pTP</shortName>
    </recommendedName>
    <alternativeName>
        <fullName evidence="1">Bellett protein</fullName>
    </alternativeName>
    <alternativeName>
        <fullName evidence="1">Precursor terminal protein</fullName>
    </alternativeName>
    <component>
        <recommendedName>
            <fullName evidence="1">Intermediate terminal protein</fullName>
            <shortName evidence="1">iTP</shortName>
        </recommendedName>
    </component>
    <component>
        <recommendedName>
            <fullName evidence="1">Terminal protein</fullName>
            <shortName evidence="1">TP</shortName>
        </recommendedName>
    </component>
</protein>
<accession>Q96682</accession>
<dbReference type="EMBL" id="Y07760">
    <property type="protein sequence ID" value="CAA69058.1"/>
    <property type="molecule type" value="Genomic_DNA"/>
</dbReference>
<dbReference type="KEGG" id="vg:1488952"/>
<dbReference type="Proteomes" id="UP000126130">
    <property type="component" value="Segment"/>
</dbReference>
<dbReference type="GO" id="GO:0044204">
    <property type="term" value="C:host cell nuclear matrix"/>
    <property type="evidence" value="ECO:0007669"/>
    <property type="project" value="UniProtKB-SubCell"/>
</dbReference>
<dbReference type="GO" id="GO:0003690">
    <property type="term" value="F:double-stranded DNA binding"/>
    <property type="evidence" value="ECO:0007669"/>
    <property type="project" value="UniProtKB-UniRule"/>
</dbReference>
<dbReference type="GO" id="GO:0003697">
    <property type="term" value="F:single-stranded DNA binding"/>
    <property type="evidence" value="ECO:0007669"/>
    <property type="project" value="UniProtKB-UniRule"/>
</dbReference>
<dbReference type="GO" id="GO:0006260">
    <property type="term" value="P:DNA replication"/>
    <property type="evidence" value="ECO:0007669"/>
    <property type="project" value="UniProtKB-KW"/>
</dbReference>
<dbReference type="GO" id="GO:0039687">
    <property type="term" value="P:viral DNA strand displacement replication"/>
    <property type="evidence" value="ECO:0007669"/>
    <property type="project" value="UniProtKB-UniRule"/>
</dbReference>
<dbReference type="HAMAP" id="MF_04061">
    <property type="entry name" value="ADV_TERM"/>
    <property type="match status" value="1"/>
</dbReference>
<dbReference type="InterPro" id="IPR003391">
    <property type="entry name" value="Adeno_preterminal"/>
</dbReference>
<dbReference type="Pfam" id="PF02459">
    <property type="entry name" value="Adeno_terminal"/>
    <property type="match status" value="1"/>
</dbReference>
<evidence type="ECO:0000255" key="1">
    <source>
        <dbReference type="HAMAP-Rule" id="MF_04061"/>
    </source>
</evidence>
<evidence type="ECO:0000256" key="2">
    <source>
        <dbReference type="SAM" id="MobiDB-lite"/>
    </source>
</evidence>
<organism>
    <name type="scientific">Canine adenovirus serotype 1 (strain RI261)</name>
    <name type="common">CAdV-1</name>
    <name type="synonym">Canine adenovirus 1 (strain RI261)</name>
    <dbReference type="NCBI Taxonomy" id="69151"/>
    <lineage>
        <taxon>Viruses</taxon>
        <taxon>Varidnaviria</taxon>
        <taxon>Bamfordvirae</taxon>
        <taxon>Preplasmiviricota</taxon>
        <taxon>Tectiliviricetes</taxon>
        <taxon>Rowavirales</taxon>
        <taxon>Adenoviridae</taxon>
        <taxon>Mastadenovirus</taxon>
        <taxon>Canine mastadenovirus A</taxon>
    </lineage>
</organism>
<keyword id="KW-0190">Covalent protein-DNA linkage</keyword>
<keyword id="KW-0235">DNA replication</keyword>
<keyword id="KW-0238">DNA-binding</keyword>
<keyword id="KW-1048">Host nucleus</keyword>
<keyword id="KW-0597">Phosphoprotein</keyword>
<keyword id="KW-1194">Viral DNA replication</keyword>
<name>TERM_ADECR</name>
<gene>
    <name evidence="1" type="primary">PTP</name>
</gene>